<evidence type="ECO:0000255" key="1">
    <source>
        <dbReference type="PROSITE-ProRule" id="PRU00173"/>
    </source>
</evidence>
<reference key="1">
    <citation type="journal article" date="1998" name="Nature">
        <title>The genome sequence of Rickettsia prowazekii and the origin of mitochondria.</title>
        <authorList>
            <person name="Andersson S.G.E."/>
            <person name="Zomorodipour A."/>
            <person name="Andersson J.O."/>
            <person name="Sicheritz-Ponten T."/>
            <person name="Alsmark U.C.M."/>
            <person name="Podowski R.M."/>
            <person name="Naeslund A.K."/>
            <person name="Eriksson A.-S."/>
            <person name="Winkler H.H."/>
            <person name="Kurland C.G."/>
        </authorList>
    </citation>
    <scope>NUCLEOTIDE SEQUENCE [LARGE SCALE GENOMIC DNA]</scope>
    <source>
        <strain>Madrid E</strain>
    </source>
</reference>
<accession>Q9ZCV8</accession>
<sequence>MLVQNICSTKAYNMLILNNNAFLVDVRTQEEWKQVGIPHLDNKNKVIFLSLQLNKNFEDNFLSIINEKIDTAIFFLCRSGYRSFIAANFIANIGYKNCYNISDGFEGNNQDKGWKQNNLPWQF</sequence>
<dbReference type="EMBL" id="AJ235272">
    <property type="protein sequence ID" value="CAA15044.1"/>
    <property type="molecule type" value="Genomic_DNA"/>
</dbReference>
<dbReference type="PIR" id="B71665">
    <property type="entry name" value="B71665"/>
</dbReference>
<dbReference type="RefSeq" id="NP_220968.1">
    <property type="nucleotide sequence ID" value="NC_000963.1"/>
</dbReference>
<dbReference type="RefSeq" id="WP_010886332.1">
    <property type="nucleotide sequence ID" value="NC_000963.1"/>
</dbReference>
<dbReference type="SMR" id="Q9ZCV8"/>
<dbReference type="STRING" id="272947.gene:17555679"/>
<dbReference type="EnsemblBacteria" id="CAA15044">
    <property type="protein sequence ID" value="CAA15044"/>
    <property type="gene ID" value="CAA15044"/>
</dbReference>
<dbReference type="KEGG" id="rpr:RP600"/>
<dbReference type="PATRIC" id="fig|272947.5.peg.618"/>
<dbReference type="eggNOG" id="COG0607">
    <property type="taxonomic scope" value="Bacteria"/>
</dbReference>
<dbReference type="HOGENOM" id="CLU_089574_10_1_5"/>
<dbReference type="OrthoDB" id="9815890at2"/>
<dbReference type="Proteomes" id="UP000002480">
    <property type="component" value="Chromosome"/>
</dbReference>
<dbReference type="CDD" id="cd01522">
    <property type="entry name" value="RHOD_1"/>
    <property type="match status" value="1"/>
</dbReference>
<dbReference type="Gene3D" id="3.40.250.10">
    <property type="entry name" value="Rhodanese-like domain"/>
    <property type="match status" value="1"/>
</dbReference>
<dbReference type="InterPro" id="IPR001763">
    <property type="entry name" value="Rhodanese-like_dom"/>
</dbReference>
<dbReference type="InterPro" id="IPR036873">
    <property type="entry name" value="Rhodanese-like_dom_sf"/>
</dbReference>
<dbReference type="InterPro" id="IPR044240">
    <property type="entry name" value="STR4-like"/>
</dbReference>
<dbReference type="PANTHER" id="PTHR47377">
    <property type="entry name" value="RHODANESE-LIKE DOMAIN-CONTAINING PROTEIN 4, CHLOROPLASTIC"/>
    <property type="match status" value="1"/>
</dbReference>
<dbReference type="PANTHER" id="PTHR47377:SF1">
    <property type="entry name" value="RHODANESE-LIKE DOMAIN-CONTAINING PROTEIN 4, CHLOROPLASTIC"/>
    <property type="match status" value="1"/>
</dbReference>
<dbReference type="Pfam" id="PF00581">
    <property type="entry name" value="Rhodanese"/>
    <property type="match status" value="1"/>
</dbReference>
<dbReference type="SMART" id="SM00450">
    <property type="entry name" value="RHOD"/>
    <property type="match status" value="1"/>
</dbReference>
<dbReference type="SUPFAM" id="SSF52821">
    <property type="entry name" value="Rhodanese/Cell cycle control phosphatase"/>
    <property type="match status" value="1"/>
</dbReference>
<dbReference type="PROSITE" id="PS50206">
    <property type="entry name" value="RHODANESE_3"/>
    <property type="match status" value="1"/>
</dbReference>
<feature type="chain" id="PRO_0000101401" description="Uncharacterized protein RP600">
    <location>
        <begin position="1"/>
        <end position="123"/>
    </location>
</feature>
<feature type="domain" description="Rhodanese" evidence="1">
    <location>
        <begin position="17"/>
        <end position="117"/>
    </location>
</feature>
<proteinExistence type="predicted"/>
<keyword id="KW-1185">Reference proteome</keyword>
<gene>
    <name type="ordered locus">RP600</name>
</gene>
<organism>
    <name type="scientific">Rickettsia prowazekii (strain Madrid E)</name>
    <dbReference type="NCBI Taxonomy" id="272947"/>
    <lineage>
        <taxon>Bacteria</taxon>
        <taxon>Pseudomonadati</taxon>
        <taxon>Pseudomonadota</taxon>
        <taxon>Alphaproteobacteria</taxon>
        <taxon>Rickettsiales</taxon>
        <taxon>Rickettsiaceae</taxon>
        <taxon>Rickettsieae</taxon>
        <taxon>Rickettsia</taxon>
        <taxon>typhus group</taxon>
    </lineage>
</organism>
<protein>
    <recommendedName>
        <fullName>Uncharacterized protein RP600</fullName>
    </recommendedName>
</protein>
<name>Y600_RICPR</name>